<comment type="function">
    <text evidence="1">Cleaves peptides in various proteins in a process that requires ATP hydrolysis. Has a chymotrypsin-like activity. Plays a major role in the degradation of misfolded proteins.</text>
</comment>
<comment type="catalytic activity">
    <reaction evidence="1">
        <text>Hydrolysis of proteins to small peptides in the presence of ATP and magnesium. alpha-casein is the usual test substrate. In the absence of ATP, only oligopeptides shorter than five residues are hydrolyzed (such as succinyl-Leu-Tyr-|-NHMec, and Leu-Tyr-Leu-|-Tyr-Trp, in which cleavage of the -Tyr-|-Leu- and -Tyr-|-Trp bonds also occurs).</text>
        <dbReference type="EC" id="3.4.21.92"/>
    </reaction>
</comment>
<comment type="subunit">
    <text evidence="1">Fourteen ClpP subunits assemble into 2 heptameric rings which stack back to back to give a disk-like structure with a central cavity, resembling the structure of eukaryotic proteasomes.</text>
</comment>
<comment type="subcellular location">
    <subcellularLocation>
        <location evidence="1">Cytoplasm</location>
    </subcellularLocation>
</comment>
<comment type="similarity">
    <text evidence="1">Belongs to the peptidase S14 family.</text>
</comment>
<accession>A3CPK8</accession>
<evidence type="ECO:0000255" key="1">
    <source>
        <dbReference type="HAMAP-Rule" id="MF_00444"/>
    </source>
</evidence>
<name>CLPP_STRSV</name>
<reference key="1">
    <citation type="journal article" date="2007" name="J. Bacteriol.">
        <title>Genome of the opportunistic pathogen Streptococcus sanguinis.</title>
        <authorList>
            <person name="Xu P."/>
            <person name="Alves J.M."/>
            <person name="Kitten T."/>
            <person name="Brown A."/>
            <person name="Chen Z."/>
            <person name="Ozaki L.S."/>
            <person name="Manque P."/>
            <person name="Ge X."/>
            <person name="Serrano M.G."/>
            <person name="Puiu D."/>
            <person name="Hendricks S."/>
            <person name="Wang Y."/>
            <person name="Chaplin M.D."/>
            <person name="Akan D."/>
            <person name="Paik S."/>
            <person name="Peterson D.L."/>
            <person name="Macrina F.L."/>
            <person name="Buck G.A."/>
        </authorList>
    </citation>
    <scope>NUCLEOTIDE SEQUENCE [LARGE SCALE GENOMIC DNA]</scope>
    <source>
        <strain>SK36</strain>
    </source>
</reference>
<dbReference type="EC" id="3.4.21.92" evidence="1"/>
<dbReference type="EMBL" id="CP000387">
    <property type="protein sequence ID" value="ABN45113.1"/>
    <property type="molecule type" value="Genomic_DNA"/>
</dbReference>
<dbReference type="RefSeq" id="YP_001035663.1">
    <property type="nucleotide sequence ID" value="NC_009009.1"/>
</dbReference>
<dbReference type="SMR" id="A3CPK8"/>
<dbReference type="STRING" id="388919.SSA_1731"/>
<dbReference type="MEROPS" id="S14.001"/>
<dbReference type="KEGG" id="ssa:SSA_1731"/>
<dbReference type="PATRIC" id="fig|388919.9.peg.1640"/>
<dbReference type="eggNOG" id="COG0740">
    <property type="taxonomic scope" value="Bacteria"/>
</dbReference>
<dbReference type="HOGENOM" id="CLU_058707_3_2_9"/>
<dbReference type="OrthoDB" id="9802800at2"/>
<dbReference type="Proteomes" id="UP000002148">
    <property type="component" value="Chromosome"/>
</dbReference>
<dbReference type="GO" id="GO:0005737">
    <property type="term" value="C:cytoplasm"/>
    <property type="evidence" value="ECO:0007669"/>
    <property type="project" value="UniProtKB-SubCell"/>
</dbReference>
<dbReference type="GO" id="GO:0009368">
    <property type="term" value="C:endopeptidase Clp complex"/>
    <property type="evidence" value="ECO:0007669"/>
    <property type="project" value="TreeGrafter"/>
</dbReference>
<dbReference type="GO" id="GO:0004176">
    <property type="term" value="F:ATP-dependent peptidase activity"/>
    <property type="evidence" value="ECO:0007669"/>
    <property type="project" value="InterPro"/>
</dbReference>
<dbReference type="GO" id="GO:0051117">
    <property type="term" value="F:ATPase binding"/>
    <property type="evidence" value="ECO:0007669"/>
    <property type="project" value="TreeGrafter"/>
</dbReference>
<dbReference type="GO" id="GO:0004252">
    <property type="term" value="F:serine-type endopeptidase activity"/>
    <property type="evidence" value="ECO:0007669"/>
    <property type="project" value="UniProtKB-UniRule"/>
</dbReference>
<dbReference type="GO" id="GO:0006515">
    <property type="term" value="P:protein quality control for misfolded or incompletely synthesized proteins"/>
    <property type="evidence" value="ECO:0007669"/>
    <property type="project" value="TreeGrafter"/>
</dbReference>
<dbReference type="CDD" id="cd07017">
    <property type="entry name" value="S14_ClpP_2"/>
    <property type="match status" value="1"/>
</dbReference>
<dbReference type="FunFam" id="3.90.226.10:FF:000014">
    <property type="entry name" value="ATP-dependent Clp protease proteolytic subunit"/>
    <property type="match status" value="1"/>
</dbReference>
<dbReference type="Gene3D" id="3.90.226.10">
    <property type="entry name" value="2-enoyl-CoA Hydratase, Chain A, domain 1"/>
    <property type="match status" value="1"/>
</dbReference>
<dbReference type="HAMAP" id="MF_00444">
    <property type="entry name" value="ClpP"/>
    <property type="match status" value="1"/>
</dbReference>
<dbReference type="InterPro" id="IPR001907">
    <property type="entry name" value="ClpP"/>
</dbReference>
<dbReference type="InterPro" id="IPR029045">
    <property type="entry name" value="ClpP/crotonase-like_dom_sf"/>
</dbReference>
<dbReference type="InterPro" id="IPR023562">
    <property type="entry name" value="ClpP/TepA"/>
</dbReference>
<dbReference type="InterPro" id="IPR033135">
    <property type="entry name" value="ClpP_His_AS"/>
</dbReference>
<dbReference type="InterPro" id="IPR018215">
    <property type="entry name" value="ClpP_Ser_AS"/>
</dbReference>
<dbReference type="NCBIfam" id="NF001368">
    <property type="entry name" value="PRK00277.1"/>
    <property type="match status" value="1"/>
</dbReference>
<dbReference type="NCBIfam" id="NF009205">
    <property type="entry name" value="PRK12553.1"/>
    <property type="match status" value="1"/>
</dbReference>
<dbReference type="PANTHER" id="PTHR10381">
    <property type="entry name" value="ATP-DEPENDENT CLP PROTEASE PROTEOLYTIC SUBUNIT"/>
    <property type="match status" value="1"/>
</dbReference>
<dbReference type="PANTHER" id="PTHR10381:SF70">
    <property type="entry name" value="ATP-DEPENDENT CLP PROTEASE PROTEOLYTIC SUBUNIT"/>
    <property type="match status" value="1"/>
</dbReference>
<dbReference type="Pfam" id="PF00574">
    <property type="entry name" value="CLP_protease"/>
    <property type="match status" value="1"/>
</dbReference>
<dbReference type="PRINTS" id="PR00127">
    <property type="entry name" value="CLPPROTEASEP"/>
</dbReference>
<dbReference type="SUPFAM" id="SSF52096">
    <property type="entry name" value="ClpP/crotonase"/>
    <property type="match status" value="1"/>
</dbReference>
<dbReference type="PROSITE" id="PS00382">
    <property type="entry name" value="CLP_PROTEASE_HIS"/>
    <property type="match status" value="1"/>
</dbReference>
<dbReference type="PROSITE" id="PS00381">
    <property type="entry name" value="CLP_PROTEASE_SER"/>
    <property type="match status" value="1"/>
</dbReference>
<gene>
    <name evidence="1" type="primary">clpP</name>
    <name type="ordered locus">SSA_1731</name>
</gene>
<organism>
    <name type="scientific">Streptococcus sanguinis (strain SK36)</name>
    <dbReference type="NCBI Taxonomy" id="388919"/>
    <lineage>
        <taxon>Bacteria</taxon>
        <taxon>Bacillati</taxon>
        <taxon>Bacillota</taxon>
        <taxon>Bacilli</taxon>
        <taxon>Lactobacillales</taxon>
        <taxon>Streptococcaceae</taxon>
        <taxon>Streptococcus</taxon>
    </lineage>
</organism>
<protein>
    <recommendedName>
        <fullName evidence="1">ATP-dependent Clp protease proteolytic subunit</fullName>
        <ecNumber evidence="1">3.4.21.92</ecNumber>
    </recommendedName>
    <alternativeName>
        <fullName evidence="1">Endopeptidase Clp</fullName>
    </alternativeName>
</protein>
<keyword id="KW-0963">Cytoplasm</keyword>
<keyword id="KW-0378">Hydrolase</keyword>
<keyword id="KW-0645">Protease</keyword>
<keyword id="KW-1185">Reference proteome</keyword>
<keyword id="KW-0720">Serine protease</keyword>
<proteinExistence type="inferred from homology"/>
<sequence length="196" mass="21555">MIPVVIEQTSRGERSYDIYSRLLKDRIIMLTGPVEDNMANSIIAQLLFLDAQDNTKDIYLYVNTPGGSVSAGLAIVDTMNFIKSDVQTIVMGVAASMGTIIASSGAKGKRFMLPNAEYLIHQPMGGAGSGTQQTDMAIVAEHLLRTRNTLEKILAENSGKSVEQIHKDAERDYWMSAQETLEYGFIDEIMENSNLS</sequence>
<feature type="chain" id="PRO_1000026137" description="ATP-dependent Clp protease proteolytic subunit">
    <location>
        <begin position="1"/>
        <end position="196"/>
    </location>
</feature>
<feature type="active site" description="Nucleophile" evidence="1">
    <location>
        <position position="96"/>
    </location>
</feature>
<feature type="active site" evidence="1">
    <location>
        <position position="121"/>
    </location>
</feature>